<reference key="1">
    <citation type="submission" date="2005-02" db="EMBL/GenBank/DDBJ databases">
        <authorList>
            <consortium name="NIH - Xenopus Gene Collection (XGC) project"/>
        </authorList>
    </citation>
    <scope>NUCLEOTIDE SEQUENCE [LARGE SCALE MRNA]</scope>
    <source>
        <tissue>Embryo</tissue>
    </source>
</reference>
<sequence length="602" mass="69459">MASNSTPKYNSNSLENSLRRSPGDGMNHEQNDEIPCLPGEALITDKDVIYMCPFYGPVKGRIHVTNYKLYFKGEEMEPLISFSVPLGVIARIEKMGGASSRGENSYGLDITCKDMRNLRFALKQEVHSRKQIFEDLTKYAFPLSHGLLLFAFQNEEKFPENGWAVYDAMTEFRRQGLPNGQWRITFINKNYELCDTYPPLLVVPYSASEEDLKKVAAFRSRNRIPVLSWLHPENQSAIMRCSQPLVGMSGKRNKDDERYLDIIRDTNGQTSKLTIYDARPNVNAVANKATGGGYESEDAYPNAELVFLDIHNIHVMRESLKKLKDIVYPNVEESHWLSSLESTHWLEHIKLVLTGAIQVADKVASGKSSVVVHCSDGWDRTAQLTSLAMLMLDSYYRTIVGFEVLVQKEWISFGHKFSSRIGHGDKNHADADRSPIFLQFIDCVWQMSKQFPTAFEFNEHFLITVLDHLYSCRFGTFLYNCENIRDKEKVREKTQSLWSLISSEKSKYTNPFYTKELNRVLYPVASMRHLELWVNYYIRWNPRIRQQQPNPVEQRYMELLALRDDYVRRLEELQITNSPKMNSSTTSPSSPSQIMPQVHTPF</sequence>
<keyword id="KW-1003">Cell membrane</keyword>
<keyword id="KW-0966">Cell projection</keyword>
<keyword id="KW-0963">Cytoplasm</keyword>
<keyword id="KW-0967">Endosome</keyword>
<keyword id="KW-0378">Hydrolase</keyword>
<keyword id="KW-0443">Lipid metabolism</keyword>
<keyword id="KW-0472">Membrane</keyword>
<keyword id="KW-0904">Protein phosphatase</keyword>
<keyword id="KW-1185">Reference proteome</keyword>
<evidence type="ECO:0000250" key="1"/>
<evidence type="ECO:0000250" key="2">
    <source>
        <dbReference type="UniProtKB" id="Q13496"/>
    </source>
</evidence>
<evidence type="ECO:0000250" key="3">
    <source>
        <dbReference type="UniProtKB" id="Q13614"/>
    </source>
</evidence>
<evidence type="ECO:0000250" key="4">
    <source>
        <dbReference type="UniProtKB" id="Q9Z2C5"/>
    </source>
</evidence>
<evidence type="ECO:0000255" key="5">
    <source>
        <dbReference type="PROSITE-ProRule" id="PRU00669"/>
    </source>
</evidence>
<evidence type="ECO:0000255" key="6">
    <source>
        <dbReference type="PROSITE-ProRule" id="PRU10044"/>
    </source>
</evidence>
<evidence type="ECO:0000256" key="7">
    <source>
        <dbReference type="SAM" id="MobiDB-lite"/>
    </source>
</evidence>
<evidence type="ECO:0000305" key="8"/>
<feature type="chain" id="PRO_0000328659" description="Myotubularin">
    <location>
        <begin position="1"/>
        <end position="602"/>
    </location>
</feature>
<feature type="domain" description="GRAM">
    <location>
        <begin position="28"/>
        <end position="96"/>
    </location>
</feature>
<feature type="domain" description="Myotubularin phosphatase" evidence="5">
    <location>
        <begin position="162"/>
        <end position="537"/>
    </location>
</feature>
<feature type="region of interest" description="Disordered" evidence="7">
    <location>
        <begin position="1"/>
        <end position="32"/>
    </location>
</feature>
<feature type="region of interest" description="Disordered" evidence="7">
    <location>
        <begin position="574"/>
        <end position="602"/>
    </location>
</feature>
<feature type="compositionally biased region" description="Basic and acidic residues" evidence="7">
    <location>
        <begin position="17"/>
        <end position="31"/>
    </location>
</feature>
<feature type="compositionally biased region" description="Low complexity" evidence="7">
    <location>
        <begin position="583"/>
        <end position="592"/>
    </location>
</feature>
<feature type="active site" description="Phosphocysteine intermediate" evidence="6">
    <location>
        <position position="374"/>
    </location>
</feature>
<feature type="binding site" evidence="3">
    <location>
        <position position="287"/>
    </location>
    <ligand>
        <name>a 1,2-diacyl-sn-glycero-3-phospho-(1D-myo-inositol-3,5-bisphosphate)</name>
        <dbReference type="ChEBI" id="CHEBI:57923"/>
    </ligand>
</feature>
<feature type="binding site" evidence="3">
    <location>
        <position position="287"/>
    </location>
    <ligand>
        <name>a 1,2-diacyl-sn-glycero-3-phospho-(1D-myo-inositol-3-phosphate)</name>
        <dbReference type="ChEBI" id="CHEBI:58088"/>
    </ligand>
</feature>
<feature type="binding site" evidence="3">
    <location>
        <position position="312"/>
    </location>
    <ligand>
        <name>a 1,2-diacyl-sn-glycero-3-phospho-(1D-myo-inositol-3,5-bisphosphate)</name>
        <dbReference type="ChEBI" id="CHEBI:57923"/>
    </ligand>
</feature>
<feature type="binding site" evidence="3">
    <location>
        <position position="312"/>
    </location>
    <ligand>
        <name>a 1,2-diacyl-sn-glycero-3-phospho-(1D-myo-inositol-3-phosphate)</name>
        <dbReference type="ChEBI" id="CHEBI:58088"/>
    </ligand>
</feature>
<feature type="binding site" evidence="3">
    <location>
        <position position="313"/>
    </location>
    <ligand>
        <name>a 1,2-diacyl-sn-glycero-3-phospho-(1D-myo-inositol-3,5-bisphosphate)</name>
        <dbReference type="ChEBI" id="CHEBI:57923"/>
    </ligand>
</feature>
<feature type="binding site" evidence="3">
    <location>
        <position position="313"/>
    </location>
    <ligand>
        <name>a 1,2-diacyl-sn-glycero-3-phospho-(1D-myo-inositol-3-phosphate)</name>
        <dbReference type="ChEBI" id="CHEBI:58088"/>
    </ligand>
</feature>
<feature type="binding site" evidence="3">
    <location>
        <position position="375"/>
    </location>
    <ligand>
        <name>a 1,2-diacyl-sn-glycero-3-phospho-(1D-myo-inositol-3,5-bisphosphate)</name>
        <dbReference type="ChEBI" id="CHEBI:57923"/>
    </ligand>
</feature>
<feature type="binding site" evidence="3">
    <location>
        <position position="375"/>
    </location>
    <ligand>
        <name>a 1,2-diacyl-sn-glycero-3-phospho-(1D-myo-inositol-3-phosphate)</name>
        <dbReference type="ChEBI" id="CHEBI:58088"/>
    </ligand>
</feature>
<feature type="binding site" evidence="3">
    <location>
        <position position="376"/>
    </location>
    <ligand>
        <name>a 1,2-diacyl-sn-glycero-3-phospho-(1D-myo-inositol-3,5-bisphosphate)</name>
        <dbReference type="ChEBI" id="CHEBI:57923"/>
    </ligand>
</feature>
<feature type="binding site" evidence="3">
    <location>
        <position position="376"/>
    </location>
    <ligand>
        <name>a 1,2-diacyl-sn-glycero-3-phospho-(1D-myo-inositol-3-phosphate)</name>
        <dbReference type="ChEBI" id="CHEBI:58088"/>
    </ligand>
</feature>
<feature type="binding site" evidence="3">
    <location>
        <position position="377"/>
    </location>
    <ligand>
        <name>a 1,2-diacyl-sn-glycero-3-phospho-(1D-myo-inositol-3,5-bisphosphate)</name>
        <dbReference type="ChEBI" id="CHEBI:57923"/>
    </ligand>
</feature>
<feature type="binding site" evidence="3">
    <location>
        <position position="377"/>
    </location>
    <ligand>
        <name>a 1,2-diacyl-sn-glycero-3-phospho-(1D-myo-inositol-3-phosphate)</name>
        <dbReference type="ChEBI" id="CHEBI:58088"/>
    </ligand>
</feature>
<feature type="binding site" evidence="3">
    <location>
        <position position="378"/>
    </location>
    <ligand>
        <name>a 1,2-diacyl-sn-glycero-3-phospho-(1D-myo-inositol-3,5-bisphosphate)</name>
        <dbReference type="ChEBI" id="CHEBI:57923"/>
    </ligand>
</feature>
<feature type="binding site" evidence="3">
    <location>
        <position position="378"/>
    </location>
    <ligand>
        <name>a 1,2-diacyl-sn-glycero-3-phospho-(1D-myo-inositol-3-phosphate)</name>
        <dbReference type="ChEBI" id="CHEBI:58088"/>
    </ligand>
</feature>
<feature type="binding site" evidence="3">
    <location>
        <position position="379"/>
    </location>
    <ligand>
        <name>a 1,2-diacyl-sn-glycero-3-phospho-(1D-myo-inositol-3,5-bisphosphate)</name>
        <dbReference type="ChEBI" id="CHEBI:57923"/>
    </ligand>
</feature>
<feature type="binding site" evidence="3">
    <location>
        <position position="379"/>
    </location>
    <ligand>
        <name>a 1,2-diacyl-sn-glycero-3-phospho-(1D-myo-inositol-3-phosphate)</name>
        <dbReference type="ChEBI" id="CHEBI:58088"/>
    </ligand>
</feature>
<feature type="binding site" evidence="3">
    <location>
        <position position="380"/>
    </location>
    <ligand>
        <name>a 1,2-diacyl-sn-glycero-3-phospho-(1D-myo-inositol-3,5-bisphosphate)</name>
        <dbReference type="ChEBI" id="CHEBI:57923"/>
    </ligand>
</feature>
<feature type="binding site" evidence="3">
    <location>
        <position position="380"/>
    </location>
    <ligand>
        <name>a 1,2-diacyl-sn-glycero-3-phospho-(1D-myo-inositol-3-phosphate)</name>
        <dbReference type="ChEBI" id="CHEBI:58088"/>
    </ligand>
</feature>
<feature type="binding site" evidence="3">
    <location>
        <position position="416"/>
    </location>
    <ligand>
        <name>a 1,2-diacyl-sn-glycero-3-phospho-(1D-myo-inositol-3,5-bisphosphate)</name>
        <dbReference type="ChEBI" id="CHEBI:57923"/>
    </ligand>
</feature>
<feature type="binding site" evidence="3">
    <location>
        <position position="420"/>
    </location>
    <ligand>
        <name>a 1,2-diacyl-sn-glycero-3-phospho-(1D-myo-inositol-3,5-bisphosphate)</name>
        <dbReference type="ChEBI" id="CHEBI:57923"/>
    </ligand>
</feature>
<feature type="binding site" evidence="3">
    <location>
        <position position="420"/>
    </location>
    <ligand>
        <name>a 1,2-diacyl-sn-glycero-3-phospho-(1D-myo-inositol-3-phosphate)</name>
        <dbReference type="ChEBI" id="CHEBI:58088"/>
    </ligand>
</feature>
<name>MTM1_XENTR</name>
<accession>Q5EB32</accession>
<organism>
    <name type="scientific">Xenopus tropicalis</name>
    <name type="common">Western clawed frog</name>
    <name type="synonym">Silurana tropicalis</name>
    <dbReference type="NCBI Taxonomy" id="8364"/>
    <lineage>
        <taxon>Eukaryota</taxon>
        <taxon>Metazoa</taxon>
        <taxon>Chordata</taxon>
        <taxon>Craniata</taxon>
        <taxon>Vertebrata</taxon>
        <taxon>Euteleostomi</taxon>
        <taxon>Amphibia</taxon>
        <taxon>Batrachia</taxon>
        <taxon>Anura</taxon>
        <taxon>Pipoidea</taxon>
        <taxon>Pipidae</taxon>
        <taxon>Xenopodinae</taxon>
        <taxon>Xenopus</taxon>
        <taxon>Silurana</taxon>
    </lineage>
</organism>
<gene>
    <name type="primary">mtm1</name>
</gene>
<dbReference type="EC" id="3.1.3.95" evidence="2"/>
<dbReference type="EMBL" id="BC090112">
    <property type="protein sequence ID" value="AAH90112.1"/>
    <property type="molecule type" value="mRNA"/>
</dbReference>
<dbReference type="RefSeq" id="NP_001015828.1">
    <property type="nucleotide sequence ID" value="NM_001015828.1"/>
</dbReference>
<dbReference type="RefSeq" id="XP_017951735.1">
    <property type="nucleotide sequence ID" value="XM_018096246.1"/>
</dbReference>
<dbReference type="SMR" id="Q5EB32"/>
<dbReference type="FunCoup" id="Q5EB32">
    <property type="interactions" value="826"/>
</dbReference>
<dbReference type="STRING" id="8364.ENSXETP00000038952"/>
<dbReference type="PaxDb" id="8364-ENSXETP00000016895"/>
<dbReference type="DNASU" id="548545"/>
<dbReference type="GeneID" id="548545"/>
<dbReference type="KEGG" id="xtr:548545"/>
<dbReference type="AGR" id="Xenbase:XB-GENE-1002030"/>
<dbReference type="CTD" id="4534"/>
<dbReference type="eggNOG" id="KOG4471">
    <property type="taxonomic scope" value="Eukaryota"/>
</dbReference>
<dbReference type="HOGENOM" id="CLU_001839_4_1_1"/>
<dbReference type="InParanoid" id="Q5EB32"/>
<dbReference type="OMA" id="FENKETY"/>
<dbReference type="OrthoDB" id="271628at2759"/>
<dbReference type="PhylomeDB" id="Q5EB32"/>
<dbReference type="TreeFam" id="TF315197"/>
<dbReference type="Reactome" id="R-XTR-1660499">
    <property type="pathway name" value="Synthesis of PIPs at the plasma membrane"/>
</dbReference>
<dbReference type="Reactome" id="R-XTR-1660516">
    <property type="pathway name" value="Synthesis of PIPs at the early endosome membrane"/>
</dbReference>
<dbReference type="Reactome" id="R-XTR-1660517">
    <property type="pathway name" value="Synthesis of PIPs at the late endosome membrane"/>
</dbReference>
<dbReference type="Proteomes" id="UP000008143">
    <property type="component" value="Chromosome 8"/>
</dbReference>
<dbReference type="Bgee" id="ENSXETG00000017786">
    <property type="expression patterns" value="Expressed in skeletal muscle tissue and 15 other cell types or tissues"/>
</dbReference>
<dbReference type="GO" id="GO:0030175">
    <property type="term" value="C:filopodium"/>
    <property type="evidence" value="ECO:0007669"/>
    <property type="project" value="UniProtKB-SubCell"/>
</dbReference>
<dbReference type="GO" id="GO:0005770">
    <property type="term" value="C:late endosome"/>
    <property type="evidence" value="ECO:0007669"/>
    <property type="project" value="UniProtKB-SubCell"/>
</dbReference>
<dbReference type="GO" id="GO:0005886">
    <property type="term" value="C:plasma membrane"/>
    <property type="evidence" value="ECO:0007669"/>
    <property type="project" value="UniProtKB-SubCell"/>
</dbReference>
<dbReference type="GO" id="GO:0001726">
    <property type="term" value="C:ruffle"/>
    <property type="evidence" value="ECO:0007669"/>
    <property type="project" value="UniProtKB-SubCell"/>
</dbReference>
<dbReference type="GO" id="GO:0030017">
    <property type="term" value="C:sarcomere"/>
    <property type="evidence" value="ECO:0007669"/>
    <property type="project" value="UniProtKB-SubCell"/>
</dbReference>
<dbReference type="GO" id="GO:0052629">
    <property type="term" value="F:phosphatidylinositol-3,5-bisphosphate 3-phosphatase activity"/>
    <property type="evidence" value="ECO:0007669"/>
    <property type="project" value="UniProtKB-EC"/>
</dbReference>
<dbReference type="GO" id="GO:0004438">
    <property type="term" value="F:phosphatidylinositol-3-phosphate phosphatase activity"/>
    <property type="evidence" value="ECO:0007669"/>
    <property type="project" value="UniProtKB-EC"/>
</dbReference>
<dbReference type="GO" id="GO:0004721">
    <property type="term" value="F:phosphoprotein phosphatase activity"/>
    <property type="evidence" value="ECO:0007669"/>
    <property type="project" value="UniProtKB-KW"/>
</dbReference>
<dbReference type="GO" id="GO:0006629">
    <property type="term" value="P:lipid metabolic process"/>
    <property type="evidence" value="ECO:0007669"/>
    <property type="project" value="UniProtKB-KW"/>
</dbReference>
<dbReference type="CDD" id="cd14591">
    <property type="entry name" value="PTP-MTM1"/>
    <property type="match status" value="1"/>
</dbReference>
<dbReference type="FunFam" id="2.30.29.30:FF:000038">
    <property type="entry name" value="Myotubularin 1, isoform CRA_a"/>
    <property type="match status" value="1"/>
</dbReference>
<dbReference type="Gene3D" id="2.30.29.30">
    <property type="entry name" value="Pleckstrin-homology domain (PH domain)/Phosphotyrosine-binding domain (PTB)"/>
    <property type="match status" value="1"/>
</dbReference>
<dbReference type="InterPro" id="IPR004182">
    <property type="entry name" value="GRAM"/>
</dbReference>
<dbReference type="InterPro" id="IPR030564">
    <property type="entry name" value="Myotubularin"/>
</dbReference>
<dbReference type="InterPro" id="IPR010569">
    <property type="entry name" value="Myotubularin-like_Pase_dom"/>
</dbReference>
<dbReference type="InterPro" id="IPR011993">
    <property type="entry name" value="PH-like_dom_sf"/>
</dbReference>
<dbReference type="InterPro" id="IPR029021">
    <property type="entry name" value="Prot-tyrosine_phosphatase-like"/>
</dbReference>
<dbReference type="InterPro" id="IPR016130">
    <property type="entry name" value="Tyr_Pase_AS"/>
</dbReference>
<dbReference type="InterPro" id="IPR003595">
    <property type="entry name" value="Tyr_Pase_cat"/>
</dbReference>
<dbReference type="InterPro" id="IPR000387">
    <property type="entry name" value="Tyr_Pase_dom"/>
</dbReference>
<dbReference type="PANTHER" id="PTHR10807:SF69">
    <property type="entry name" value="MYOTUBULARIN"/>
    <property type="match status" value="1"/>
</dbReference>
<dbReference type="PANTHER" id="PTHR10807">
    <property type="entry name" value="MYOTUBULARIN-RELATED"/>
    <property type="match status" value="1"/>
</dbReference>
<dbReference type="Pfam" id="PF02893">
    <property type="entry name" value="GRAM"/>
    <property type="match status" value="1"/>
</dbReference>
<dbReference type="Pfam" id="PF06602">
    <property type="entry name" value="Myotub-related"/>
    <property type="match status" value="1"/>
</dbReference>
<dbReference type="SMART" id="SM00568">
    <property type="entry name" value="GRAM"/>
    <property type="match status" value="1"/>
</dbReference>
<dbReference type="SMART" id="SM00404">
    <property type="entry name" value="PTPc_motif"/>
    <property type="match status" value="1"/>
</dbReference>
<dbReference type="SUPFAM" id="SSF52799">
    <property type="entry name" value="(Phosphotyrosine protein) phosphatases II"/>
    <property type="match status" value="1"/>
</dbReference>
<dbReference type="SUPFAM" id="SSF50729">
    <property type="entry name" value="PH domain-like"/>
    <property type="match status" value="1"/>
</dbReference>
<dbReference type="PROSITE" id="PS51339">
    <property type="entry name" value="PPASE_MYOTUBULARIN"/>
    <property type="match status" value="1"/>
</dbReference>
<dbReference type="PROSITE" id="PS00383">
    <property type="entry name" value="TYR_PHOSPHATASE_1"/>
    <property type="match status" value="1"/>
</dbReference>
<dbReference type="PROSITE" id="PS50056">
    <property type="entry name" value="TYR_PHOSPHATASE_2"/>
    <property type="match status" value="1"/>
</dbReference>
<proteinExistence type="evidence at transcript level"/>
<protein>
    <recommendedName>
        <fullName evidence="2">Myotubularin</fullName>
        <ecNumber evidence="2">3.1.3.95</ecNumber>
    </recommendedName>
    <alternativeName>
        <fullName evidence="2">Phosphatidylinositol-3,5-bisphosphate 3-phosphatase</fullName>
    </alternativeName>
    <alternativeName>
        <fullName evidence="2">Phosphatidylinositol-3-phosphate phosphatase</fullName>
    </alternativeName>
</protein>
<comment type="function">
    <text evidence="2">Lipid phosphatase which dephosphorylates phosphatidylinositol 3-monophosphate (PI3P) and phosphatidylinositol 3,5-bisphosphate (PI(3,5)P2).</text>
</comment>
<comment type="catalytic activity">
    <reaction evidence="2">
        <text>a 1,2-diacyl-sn-glycero-3-phospho-(1D-myo-inositol-3-phosphate) + H2O = a 1,2-diacyl-sn-glycero-3-phospho-(1D-myo-inositol) + phosphate</text>
        <dbReference type="Rhea" id="RHEA:12316"/>
        <dbReference type="ChEBI" id="CHEBI:15377"/>
        <dbReference type="ChEBI" id="CHEBI:43474"/>
        <dbReference type="ChEBI" id="CHEBI:57880"/>
        <dbReference type="ChEBI" id="CHEBI:58088"/>
    </reaction>
</comment>
<comment type="catalytic activity">
    <reaction evidence="2">
        <text>a 1,2-diacyl-sn-glycero-3-phospho-(1D-myo-inositol-3,5-bisphosphate) + H2O = a 1,2-diacyl-sn-glycero-3-phospho-(1D-myo-inositol-5-phosphate) + phosphate</text>
        <dbReference type="Rhea" id="RHEA:39019"/>
        <dbReference type="ChEBI" id="CHEBI:15377"/>
        <dbReference type="ChEBI" id="CHEBI:43474"/>
        <dbReference type="ChEBI" id="CHEBI:57795"/>
        <dbReference type="ChEBI" id="CHEBI:57923"/>
        <dbReference type="EC" id="3.1.3.95"/>
    </reaction>
</comment>
<comment type="catalytic activity">
    <reaction evidence="2">
        <text>1,2-dioctanoyl-sn-glycero-3-phospho-(1-D-myo-inositol-3-phosphate) + H2O = 1,2-dioctanoyl-sn-glycero-3-phospho-(1D-myo-inositol) + phosphate</text>
        <dbReference type="Rhea" id="RHEA:42328"/>
        <dbReference type="ChEBI" id="CHEBI:15377"/>
        <dbReference type="ChEBI" id="CHEBI:43474"/>
        <dbReference type="ChEBI" id="CHEBI:65221"/>
        <dbReference type="ChEBI" id="CHEBI:78934"/>
    </reaction>
</comment>
<comment type="catalytic activity">
    <reaction evidence="2">
        <text>1,2-dioctanoyl-sn-glycero-3-phospho-(1D-myo-inositol-3,5-bisphosphate) + H2O = 1,2-dioctanoyl-sn-glycero-3-phospho-(1D-myo-inositol-5-phosphate) + phosphate</text>
        <dbReference type="Rhea" id="RHEA:45632"/>
        <dbReference type="ChEBI" id="CHEBI:15377"/>
        <dbReference type="ChEBI" id="CHEBI:43474"/>
        <dbReference type="ChEBI" id="CHEBI:78911"/>
        <dbReference type="ChEBI" id="CHEBI:85342"/>
    </reaction>
</comment>
<comment type="catalytic activity">
    <reaction evidence="2">
        <text>1,2-dihexadecanoyl-sn-glycero-3-phospho-(1D-myo-inositol-3,5-phosphate) + H2O = 1,2-dihexadecanoyl-sn-glycero-3-phospho-(1D-myo-inositol-5-phosphate) + phosphate</text>
        <dbReference type="Rhea" id="RHEA:45636"/>
        <dbReference type="ChEBI" id="CHEBI:15377"/>
        <dbReference type="ChEBI" id="CHEBI:43474"/>
        <dbReference type="ChEBI" id="CHEBI:78994"/>
        <dbReference type="ChEBI" id="CHEBI:84968"/>
    </reaction>
</comment>
<comment type="subcellular location">
    <subcellularLocation>
        <location evidence="2">Cytoplasm</location>
    </subcellularLocation>
    <subcellularLocation>
        <location evidence="2">Cell membrane</location>
        <topology evidence="2">Peripheral membrane protein</topology>
    </subcellularLocation>
    <subcellularLocation>
        <location evidence="1">Cell projection</location>
        <location evidence="1">Filopodium</location>
    </subcellularLocation>
    <subcellularLocation>
        <location evidence="2">Cell projection</location>
        <location evidence="2">Ruffle</location>
    </subcellularLocation>
    <subcellularLocation>
        <location evidence="2">Late endosome</location>
    </subcellularLocation>
    <subcellularLocation>
        <location evidence="4">Cytoplasm</location>
        <location evidence="4">Myofibril</location>
        <location evidence="4">Sarcomere</location>
    </subcellularLocation>
</comment>
<comment type="domain">
    <text evidence="2">The GRAM domain mediates binding to PI(3,5)P2 and, with lower affinity, to other phosphoinositides.</text>
</comment>
<comment type="similarity">
    <text evidence="8">Belongs to the protein-tyrosine phosphatase family. Non-receptor class myotubularin subfamily.</text>
</comment>